<name>IF3_IDILO</name>
<protein>
    <recommendedName>
        <fullName evidence="1">Translation initiation factor IF-3</fullName>
    </recommendedName>
</protein>
<reference key="1">
    <citation type="journal article" date="2004" name="Proc. Natl. Acad. Sci. U.S.A.">
        <title>Genome sequence of the deep-sea gamma-proteobacterium Idiomarina loihiensis reveals amino acid fermentation as a source of carbon and energy.</title>
        <authorList>
            <person name="Hou S."/>
            <person name="Saw J.H."/>
            <person name="Lee K.S."/>
            <person name="Freitas T.A."/>
            <person name="Belisle C."/>
            <person name="Kawarabayasi Y."/>
            <person name="Donachie S.P."/>
            <person name="Pikina A."/>
            <person name="Galperin M.Y."/>
            <person name="Koonin E.V."/>
            <person name="Makarova K.S."/>
            <person name="Omelchenko M.V."/>
            <person name="Sorokin A."/>
            <person name="Wolf Y.I."/>
            <person name="Li Q.X."/>
            <person name="Keum Y.S."/>
            <person name="Campbell S."/>
            <person name="Denery J."/>
            <person name="Aizawa S."/>
            <person name="Shibata S."/>
            <person name="Malahoff A."/>
            <person name="Alam M."/>
        </authorList>
    </citation>
    <scope>NUCLEOTIDE SEQUENCE [LARGE SCALE GENOMIC DNA]</scope>
    <source>
        <strain>ATCC BAA-735 / DSM 15497 / L2-TR</strain>
    </source>
</reference>
<proteinExistence type="inferred from homology"/>
<evidence type="ECO:0000255" key="1">
    <source>
        <dbReference type="HAMAP-Rule" id="MF_00080"/>
    </source>
</evidence>
<dbReference type="EMBL" id="AE017340">
    <property type="protein sequence ID" value="AAV82238.1"/>
    <property type="molecule type" value="Genomic_DNA"/>
</dbReference>
<dbReference type="RefSeq" id="WP_011234644.1">
    <property type="nucleotide sequence ID" value="NC_006512.1"/>
</dbReference>
<dbReference type="SMR" id="Q5QYN5"/>
<dbReference type="STRING" id="283942.IL1398"/>
<dbReference type="GeneID" id="78251951"/>
<dbReference type="KEGG" id="ilo:IL1398"/>
<dbReference type="eggNOG" id="COG0290">
    <property type="taxonomic scope" value="Bacteria"/>
</dbReference>
<dbReference type="HOGENOM" id="CLU_054919_3_2_6"/>
<dbReference type="OrthoDB" id="9806014at2"/>
<dbReference type="Proteomes" id="UP000001171">
    <property type="component" value="Chromosome"/>
</dbReference>
<dbReference type="GO" id="GO:0005829">
    <property type="term" value="C:cytosol"/>
    <property type="evidence" value="ECO:0007669"/>
    <property type="project" value="TreeGrafter"/>
</dbReference>
<dbReference type="GO" id="GO:0016020">
    <property type="term" value="C:membrane"/>
    <property type="evidence" value="ECO:0007669"/>
    <property type="project" value="TreeGrafter"/>
</dbReference>
<dbReference type="GO" id="GO:0043022">
    <property type="term" value="F:ribosome binding"/>
    <property type="evidence" value="ECO:0007669"/>
    <property type="project" value="TreeGrafter"/>
</dbReference>
<dbReference type="GO" id="GO:0003743">
    <property type="term" value="F:translation initiation factor activity"/>
    <property type="evidence" value="ECO:0007669"/>
    <property type="project" value="UniProtKB-UniRule"/>
</dbReference>
<dbReference type="GO" id="GO:0032790">
    <property type="term" value="P:ribosome disassembly"/>
    <property type="evidence" value="ECO:0007669"/>
    <property type="project" value="TreeGrafter"/>
</dbReference>
<dbReference type="FunFam" id="3.10.20.80:FF:000001">
    <property type="entry name" value="Translation initiation factor IF-3"/>
    <property type="match status" value="1"/>
</dbReference>
<dbReference type="FunFam" id="3.30.110.10:FF:000001">
    <property type="entry name" value="Translation initiation factor IF-3"/>
    <property type="match status" value="1"/>
</dbReference>
<dbReference type="Gene3D" id="3.30.110.10">
    <property type="entry name" value="Translation initiation factor 3 (IF-3), C-terminal domain"/>
    <property type="match status" value="1"/>
</dbReference>
<dbReference type="Gene3D" id="3.10.20.80">
    <property type="entry name" value="Translation initiation factor 3 (IF-3), N-terminal domain"/>
    <property type="match status" value="1"/>
</dbReference>
<dbReference type="HAMAP" id="MF_00080">
    <property type="entry name" value="IF_3"/>
    <property type="match status" value="1"/>
</dbReference>
<dbReference type="InterPro" id="IPR036788">
    <property type="entry name" value="T_IF-3_C_sf"/>
</dbReference>
<dbReference type="InterPro" id="IPR036787">
    <property type="entry name" value="T_IF-3_N_sf"/>
</dbReference>
<dbReference type="InterPro" id="IPR019813">
    <property type="entry name" value="Translation_initiation_fac3_CS"/>
</dbReference>
<dbReference type="InterPro" id="IPR001288">
    <property type="entry name" value="Translation_initiation_fac_3"/>
</dbReference>
<dbReference type="InterPro" id="IPR019815">
    <property type="entry name" value="Translation_initiation_fac_3_C"/>
</dbReference>
<dbReference type="InterPro" id="IPR019814">
    <property type="entry name" value="Translation_initiation_fac_3_N"/>
</dbReference>
<dbReference type="NCBIfam" id="TIGR00168">
    <property type="entry name" value="infC"/>
    <property type="match status" value="1"/>
</dbReference>
<dbReference type="PANTHER" id="PTHR10938">
    <property type="entry name" value="TRANSLATION INITIATION FACTOR IF-3"/>
    <property type="match status" value="1"/>
</dbReference>
<dbReference type="PANTHER" id="PTHR10938:SF0">
    <property type="entry name" value="TRANSLATION INITIATION FACTOR IF-3, MITOCHONDRIAL"/>
    <property type="match status" value="1"/>
</dbReference>
<dbReference type="Pfam" id="PF00707">
    <property type="entry name" value="IF3_C"/>
    <property type="match status" value="1"/>
</dbReference>
<dbReference type="Pfam" id="PF05198">
    <property type="entry name" value="IF3_N"/>
    <property type="match status" value="1"/>
</dbReference>
<dbReference type="SUPFAM" id="SSF55200">
    <property type="entry name" value="Translation initiation factor IF3, C-terminal domain"/>
    <property type="match status" value="1"/>
</dbReference>
<dbReference type="SUPFAM" id="SSF54364">
    <property type="entry name" value="Translation initiation factor IF3, N-terminal domain"/>
    <property type="match status" value="1"/>
</dbReference>
<dbReference type="PROSITE" id="PS00938">
    <property type="entry name" value="IF3"/>
    <property type="match status" value="1"/>
</dbReference>
<sequence>MKGGKRTQKAADKNRINEQITGVDEVRLIGTDGEQAGVVSINEALDAAAEAGVDLVEMSPNAEPPVCRLMDYGKFLFEKSKEQKEQKKKQKQIQVKEVKFRPGTDEGDYQVKLRNLRRFLEGGDKTKVTIRFRGREMAHQELGIELLNRVKNDLEEISIVESFPRRAEGRQMIMVLAPNKK</sequence>
<comment type="function">
    <text evidence="1">IF-3 binds to the 30S ribosomal subunit and shifts the equilibrium between 70S ribosomes and their 50S and 30S subunits in favor of the free subunits, thus enhancing the availability of 30S subunits on which protein synthesis initiation begins.</text>
</comment>
<comment type="subunit">
    <text evidence="1">Monomer.</text>
</comment>
<comment type="subcellular location">
    <subcellularLocation>
        <location evidence="1">Cytoplasm</location>
    </subcellularLocation>
</comment>
<comment type="similarity">
    <text evidence="1">Belongs to the IF-3 family.</text>
</comment>
<organism>
    <name type="scientific">Idiomarina loihiensis (strain ATCC BAA-735 / DSM 15497 / L2-TR)</name>
    <dbReference type="NCBI Taxonomy" id="283942"/>
    <lineage>
        <taxon>Bacteria</taxon>
        <taxon>Pseudomonadati</taxon>
        <taxon>Pseudomonadota</taxon>
        <taxon>Gammaproteobacteria</taxon>
        <taxon>Alteromonadales</taxon>
        <taxon>Idiomarinaceae</taxon>
        <taxon>Idiomarina</taxon>
    </lineage>
</organism>
<accession>Q5QYN5</accession>
<gene>
    <name evidence="1" type="primary">infC</name>
    <name type="ordered locus">IL1398</name>
</gene>
<feature type="chain" id="PRO_0000177527" description="Translation initiation factor IF-3">
    <location>
        <begin position="1"/>
        <end position="181"/>
    </location>
</feature>
<keyword id="KW-0963">Cytoplasm</keyword>
<keyword id="KW-0396">Initiation factor</keyword>
<keyword id="KW-0648">Protein biosynthesis</keyword>
<keyword id="KW-1185">Reference proteome</keyword>